<comment type="function">
    <text evidence="1">Core subunit of the mitochondrial membrane respiratory chain NADH dehydrogenase (Complex I) which catalyzes electron transfer from NADH through the respiratory chain, using ubiquinone as an electron acceptor. Part of the enzyme membrane arm which is embedded in the lipid bilayer and involved in proton translocation.</text>
</comment>
<comment type="catalytic activity">
    <reaction evidence="1">
        <text>a ubiquinone + NADH + 5 H(+)(in) = a ubiquinol + NAD(+) + 4 H(+)(out)</text>
        <dbReference type="Rhea" id="RHEA:29091"/>
        <dbReference type="Rhea" id="RHEA-COMP:9565"/>
        <dbReference type="Rhea" id="RHEA-COMP:9566"/>
        <dbReference type="ChEBI" id="CHEBI:15378"/>
        <dbReference type="ChEBI" id="CHEBI:16389"/>
        <dbReference type="ChEBI" id="CHEBI:17976"/>
        <dbReference type="ChEBI" id="CHEBI:57540"/>
        <dbReference type="ChEBI" id="CHEBI:57945"/>
        <dbReference type="EC" id="7.1.1.2"/>
    </reaction>
    <physiologicalReaction direction="left-to-right" evidence="1">
        <dbReference type="Rhea" id="RHEA:29092"/>
    </physiologicalReaction>
</comment>
<comment type="subunit">
    <text evidence="2">Core subunit of respiratory chain NADH dehydrogenase (Complex I) which is composed of 45 different subunits.</text>
</comment>
<comment type="subcellular location">
    <subcellularLocation>
        <location evidence="2">Mitochondrion inner membrane</location>
        <topology evidence="3">Multi-pass membrane protein</topology>
    </subcellularLocation>
</comment>
<comment type="similarity">
    <text evidence="4">Belongs to the complex I subunit 4L family.</text>
</comment>
<gene>
    <name type="primary">MT-ND4L</name>
    <name type="synonym">MTND4L</name>
    <name type="synonym">NADH4L</name>
    <name type="synonym">ND4L</name>
</gene>
<proteinExistence type="inferred from homology"/>
<feature type="chain" id="PRO_0000275076" description="NADH-ubiquinone oxidoreductase chain 4L">
    <location>
        <begin position="1"/>
        <end position="98"/>
    </location>
</feature>
<feature type="transmembrane region" description="Helical" evidence="3">
    <location>
        <begin position="1"/>
        <end position="21"/>
    </location>
</feature>
<feature type="transmembrane region" description="Helical" evidence="3">
    <location>
        <begin position="29"/>
        <end position="49"/>
    </location>
</feature>
<feature type="transmembrane region" description="Helical" evidence="3">
    <location>
        <begin position="59"/>
        <end position="79"/>
    </location>
</feature>
<accession>Q5QRZ3</accession>
<sequence>MTAIYLNLTMAFSLALMGVLVYRSHLMSTLLCLEGMMLSLFILMTLLITHYRMSSISMLPLTLLVFSACEAAIGLALLVKMFTSYGNDHVQNLNLLKC</sequence>
<keyword id="KW-0249">Electron transport</keyword>
<keyword id="KW-0472">Membrane</keyword>
<keyword id="KW-0496">Mitochondrion</keyword>
<keyword id="KW-0999">Mitochondrion inner membrane</keyword>
<keyword id="KW-0520">NAD</keyword>
<keyword id="KW-0679">Respiratory chain</keyword>
<keyword id="KW-1278">Translocase</keyword>
<keyword id="KW-0812">Transmembrane</keyword>
<keyword id="KW-1133">Transmembrane helix</keyword>
<keyword id="KW-0813">Transport</keyword>
<keyword id="KW-0830">Ubiquinone</keyword>
<reference key="1">
    <citation type="journal article" date="2004" name="Gene">
        <title>Marsupial relationships and a timeline for marsupial radiation in South Gondwana.</title>
        <authorList>
            <person name="Nilsson M.A."/>
            <person name="Arnason U."/>
            <person name="Spencer P.B.S."/>
            <person name="Janke A."/>
        </authorList>
    </citation>
    <scope>NUCLEOTIDE SEQUENCE [GENOMIC DNA]</scope>
</reference>
<evidence type="ECO:0000250" key="1">
    <source>
        <dbReference type="UniProtKB" id="P03901"/>
    </source>
</evidence>
<evidence type="ECO:0000250" key="2">
    <source>
        <dbReference type="UniProtKB" id="P03902"/>
    </source>
</evidence>
<evidence type="ECO:0000255" key="3"/>
<evidence type="ECO:0000305" key="4"/>
<organism>
    <name type="scientific">Notoryctes typhlops</name>
    <name type="common">Southern marsupial mole</name>
    <name type="synonym">Psammoryctes typhlops</name>
    <dbReference type="NCBI Taxonomy" id="37699"/>
    <lineage>
        <taxon>Eukaryota</taxon>
        <taxon>Metazoa</taxon>
        <taxon>Chordata</taxon>
        <taxon>Craniata</taxon>
        <taxon>Vertebrata</taxon>
        <taxon>Euteleostomi</taxon>
        <taxon>Mammalia</taxon>
        <taxon>Metatheria</taxon>
        <taxon>Notoryctemorphia</taxon>
        <taxon>Notoryctidae</taxon>
        <taxon>Notoryctes</taxon>
    </lineage>
</organism>
<name>NU4LM_NOTTY</name>
<protein>
    <recommendedName>
        <fullName>NADH-ubiquinone oxidoreductase chain 4L</fullName>
        <ecNumber>7.1.1.2</ecNumber>
    </recommendedName>
    <alternativeName>
        <fullName>NADH dehydrogenase subunit 4L</fullName>
    </alternativeName>
</protein>
<dbReference type="EC" id="7.1.1.2"/>
<dbReference type="EMBL" id="AJ639874">
    <property type="protein sequence ID" value="CAG26454.1"/>
    <property type="molecule type" value="Genomic_DNA"/>
</dbReference>
<dbReference type="RefSeq" id="YP_161255.1">
    <property type="nucleotide sequence ID" value="NC_006522.1"/>
</dbReference>
<dbReference type="SMR" id="Q5QRZ3"/>
<dbReference type="GeneID" id="3187080"/>
<dbReference type="CTD" id="4539"/>
<dbReference type="GO" id="GO:0005743">
    <property type="term" value="C:mitochondrial inner membrane"/>
    <property type="evidence" value="ECO:0000250"/>
    <property type="project" value="UniProtKB"/>
</dbReference>
<dbReference type="GO" id="GO:0045271">
    <property type="term" value="C:respiratory chain complex I"/>
    <property type="evidence" value="ECO:0000250"/>
    <property type="project" value="UniProtKB"/>
</dbReference>
<dbReference type="GO" id="GO:0008137">
    <property type="term" value="F:NADH dehydrogenase (ubiquinone) activity"/>
    <property type="evidence" value="ECO:0000250"/>
    <property type="project" value="UniProtKB"/>
</dbReference>
<dbReference type="GO" id="GO:0042773">
    <property type="term" value="P:ATP synthesis coupled electron transport"/>
    <property type="evidence" value="ECO:0007669"/>
    <property type="project" value="InterPro"/>
</dbReference>
<dbReference type="FunFam" id="1.10.287.3510:FF:000002">
    <property type="entry name" value="NADH-ubiquinone oxidoreductase chain 4L"/>
    <property type="match status" value="1"/>
</dbReference>
<dbReference type="Gene3D" id="1.10.287.3510">
    <property type="match status" value="1"/>
</dbReference>
<dbReference type="InterPro" id="IPR001133">
    <property type="entry name" value="NADH_UbQ_OxRdtase_chain4L/K"/>
</dbReference>
<dbReference type="InterPro" id="IPR039428">
    <property type="entry name" value="NUOK/Mnh_C1-like"/>
</dbReference>
<dbReference type="PANTHER" id="PTHR11434:SF0">
    <property type="entry name" value="NADH-UBIQUINONE OXIDOREDUCTASE CHAIN 4L"/>
    <property type="match status" value="1"/>
</dbReference>
<dbReference type="PANTHER" id="PTHR11434">
    <property type="entry name" value="NADH-UBIQUINONE OXIDOREDUCTASE SUBUNIT ND4L"/>
    <property type="match status" value="1"/>
</dbReference>
<dbReference type="Pfam" id="PF00420">
    <property type="entry name" value="Oxidored_q2"/>
    <property type="match status" value="1"/>
</dbReference>
<geneLocation type="mitochondrion"/>